<dbReference type="EC" id="2.3.1.15" evidence="1"/>
<dbReference type="EMBL" id="CP000438">
    <property type="protein sequence ID" value="ABJ12906.1"/>
    <property type="molecule type" value="Genomic_DNA"/>
</dbReference>
<dbReference type="RefSeq" id="WP_003092456.1">
    <property type="nucleotide sequence ID" value="NZ_CP034244.1"/>
</dbReference>
<dbReference type="SMR" id="Q02RE5"/>
<dbReference type="KEGG" id="pau:PA14_16860"/>
<dbReference type="PseudoCAP" id="PA14_16860"/>
<dbReference type="HOGENOM" id="CLU_015407_0_0_6"/>
<dbReference type="BioCyc" id="PAER208963:G1G74-1388-MONOMER"/>
<dbReference type="UniPathway" id="UPA00557">
    <property type="reaction ID" value="UER00612"/>
</dbReference>
<dbReference type="Proteomes" id="UP000000653">
    <property type="component" value="Chromosome"/>
</dbReference>
<dbReference type="GO" id="GO:0005886">
    <property type="term" value="C:plasma membrane"/>
    <property type="evidence" value="ECO:0007669"/>
    <property type="project" value="UniProtKB-SubCell"/>
</dbReference>
<dbReference type="GO" id="GO:0004366">
    <property type="term" value="F:glycerol-3-phosphate O-acyltransferase activity"/>
    <property type="evidence" value="ECO:0007669"/>
    <property type="project" value="UniProtKB-UniRule"/>
</dbReference>
<dbReference type="GO" id="GO:0016024">
    <property type="term" value="P:CDP-diacylglycerol biosynthetic process"/>
    <property type="evidence" value="ECO:0007669"/>
    <property type="project" value="UniProtKB-UniRule"/>
</dbReference>
<dbReference type="GO" id="GO:0006631">
    <property type="term" value="P:fatty acid metabolic process"/>
    <property type="evidence" value="ECO:0007669"/>
    <property type="project" value="TreeGrafter"/>
</dbReference>
<dbReference type="CDD" id="cd07993">
    <property type="entry name" value="LPLAT_DHAPAT-like"/>
    <property type="match status" value="1"/>
</dbReference>
<dbReference type="HAMAP" id="MF_00393">
    <property type="entry name" value="Glyc3P_acyltrans"/>
    <property type="match status" value="1"/>
</dbReference>
<dbReference type="InterPro" id="IPR022284">
    <property type="entry name" value="GPAT/DHAPAT"/>
</dbReference>
<dbReference type="InterPro" id="IPR045520">
    <property type="entry name" value="GPAT/DHAPAT_C"/>
</dbReference>
<dbReference type="InterPro" id="IPR041728">
    <property type="entry name" value="GPAT/DHAPAT_LPLAT"/>
</dbReference>
<dbReference type="InterPro" id="IPR028354">
    <property type="entry name" value="GPAT_PlsB"/>
</dbReference>
<dbReference type="InterPro" id="IPR002123">
    <property type="entry name" value="Plipid/glycerol_acylTrfase"/>
</dbReference>
<dbReference type="NCBIfam" id="TIGR03703">
    <property type="entry name" value="plsB"/>
    <property type="match status" value="1"/>
</dbReference>
<dbReference type="NCBIfam" id="NF003441">
    <property type="entry name" value="PRK04974.1"/>
    <property type="match status" value="1"/>
</dbReference>
<dbReference type="PANTHER" id="PTHR12563:SF17">
    <property type="entry name" value="DIHYDROXYACETONE PHOSPHATE ACYLTRANSFERASE"/>
    <property type="match status" value="1"/>
</dbReference>
<dbReference type="PANTHER" id="PTHR12563">
    <property type="entry name" value="GLYCEROL-3-PHOSPHATE ACYLTRANSFERASE"/>
    <property type="match status" value="1"/>
</dbReference>
<dbReference type="Pfam" id="PF01553">
    <property type="entry name" value="Acyltransferase"/>
    <property type="match status" value="1"/>
</dbReference>
<dbReference type="Pfam" id="PF19277">
    <property type="entry name" value="GPAT_C"/>
    <property type="match status" value="1"/>
</dbReference>
<dbReference type="PIRSF" id="PIRSF500064">
    <property type="entry name" value="GPAT"/>
    <property type="match status" value="1"/>
</dbReference>
<dbReference type="PIRSF" id="PIRSF000437">
    <property type="entry name" value="GPAT_DHAPAT"/>
    <property type="match status" value="1"/>
</dbReference>
<dbReference type="SMART" id="SM00563">
    <property type="entry name" value="PlsC"/>
    <property type="match status" value="1"/>
</dbReference>
<dbReference type="SUPFAM" id="SSF69593">
    <property type="entry name" value="Glycerol-3-phosphate (1)-acyltransferase"/>
    <property type="match status" value="1"/>
</dbReference>
<comment type="catalytic activity">
    <reaction evidence="1">
        <text>sn-glycerol 3-phosphate + an acyl-CoA = a 1-acyl-sn-glycero-3-phosphate + CoA</text>
        <dbReference type="Rhea" id="RHEA:15325"/>
        <dbReference type="ChEBI" id="CHEBI:57287"/>
        <dbReference type="ChEBI" id="CHEBI:57597"/>
        <dbReference type="ChEBI" id="CHEBI:57970"/>
        <dbReference type="ChEBI" id="CHEBI:58342"/>
        <dbReference type="EC" id="2.3.1.15"/>
    </reaction>
</comment>
<comment type="pathway">
    <text evidence="1">Phospholipid metabolism; CDP-diacylglycerol biosynthesis; CDP-diacylglycerol from sn-glycerol 3-phosphate: step 1/3.</text>
</comment>
<comment type="subcellular location">
    <subcellularLocation>
        <location evidence="1">Cell inner membrane</location>
        <topology evidence="1">Peripheral membrane protein</topology>
        <orientation evidence="1">Cytoplasmic side</orientation>
    </subcellularLocation>
</comment>
<comment type="domain">
    <text evidence="1">The HXXXXD motif is essential for acyltransferase activity and may constitute the binding site for the phosphate moiety of the glycerol-3-phosphate.</text>
</comment>
<comment type="similarity">
    <text evidence="1">Belongs to the GPAT/DAPAT family.</text>
</comment>
<accession>Q02RE5</accession>
<reference key="1">
    <citation type="journal article" date="2006" name="Genome Biol.">
        <title>Genomic analysis reveals that Pseudomonas aeruginosa virulence is combinatorial.</title>
        <authorList>
            <person name="Lee D.G."/>
            <person name="Urbach J.M."/>
            <person name="Wu G."/>
            <person name="Liberati N.T."/>
            <person name="Feinbaum R.L."/>
            <person name="Miyata S."/>
            <person name="Diggins L.T."/>
            <person name="He J."/>
            <person name="Saucier M."/>
            <person name="Deziel E."/>
            <person name="Friedman L."/>
            <person name="Li L."/>
            <person name="Grills G."/>
            <person name="Montgomery K."/>
            <person name="Kucherlapati R."/>
            <person name="Rahme L.G."/>
            <person name="Ausubel F.M."/>
        </authorList>
    </citation>
    <scope>NUCLEOTIDE SEQUENCE [LARGE SCALE GENOMIC DNA]</scope>
    <source>
        <strain>UCBPP-PA14</strain>
    </source>
</reference>
<gene>
    <name evidence="1" type="primary">plsB</name>
    <name type="ordered locus">PA14_16860</name>
</gene>
<name>PLSB_PSEAB</name>
<proteinExistence type="inferred from homology"/>
<evidence type="ECO:0000255" key="1">
    <source>
        <dbReference type="HAMAP-Rule" id="MF_00393"/>
    </source>
</evidence>
<sequence length="834" mass="94785">MPRYPFRRFGFGALRRLLYLWVRSETINQSAFTLKIDRSKPVLYVLQQPSVSDLAVVDTECRKAGLPRPVMPVAVGDAIEPAAFFYLTPEPDWLGRQDKRGASPTLVRMLAAVGQNGLDDAQIIPVSVFWGQSPDSESSPWKLLFADNWAVTGRLRKLARILILGRKTRVQFSAPIHLRELVEQGKGHERTLRMVNRILRVHFRNLKTAVIGPDLSHRRNLVKGLLRAPLVRQAINEECESERISQEKAEGIALRYANEIASDFSYPVIRFLEVILSWFWNKLYEGVKVNHIERVQDVAQGNEIVYVPCHRSHIDYLLLSYLLFRNGLTPPHIAAGINLNMPVIGSILRRGGAFFMRRSFKGNQLYTAVFNEYLHTLFSRGFSTEYFVEGGRSRTGRMLHPRTGMLAITLRSFLRDSRRPIVFVPVYIGYERVLEGRTYLGELRGATKKKESIFDLFKVVGALKQRFGQVWVNFGEPIHLDQFLDRHQPDWQDQDLGPEYRPDWLPQTTNLLAKDVARHLNDAAAINPVNLVALALLSTSRQALDESALARILDLYLALLRKVPYSPSATLPDGDGQALIEYVKSMNLLAEQKDALGRILYLDEQNAVLATYYRNNVLHVFALPALIASFFQSNSRISREQLLRFARALYPYLQAELFIRWSLDELDAVIDQWLAALVEQGLLRQENDTFIRPAPSSRQYVLLILLARSVTQTLQRFYMAIALLLNAGQNALTAEELENLCTVMAQRLSILHGLNAPEFFDKSLFRHFIQTLLDLRVLRKDEAGKLSYHELLGELAEGAAKRVLPAEIRLSIRQVALERPAEEAAAESNDAAAN</sequence>
<organism>
    <name type="scientific">Pseudomonas aeruginosa (strain UCBPP-PA14)</name>
    <dbReference type="NCBI Taxonomy" id="208963"/>
    <lineage>
        <taxon>Bacteria</taxon>
        <taxon>Pseudomonadati</taxon>
        <taxon>Pseudomonadota</taxon>
        <taxon>Gammaproteobacteria</taxon>
        <taxon>Pseudomonadales</taxon>
        <taxon>Pseudomonadaceae</taxon>
        <taxon>Pseudomonas</taxon>
    </lineage>
</organism>
<feature type="chain" id="PRO_1000049443" description="Glycerol-3-phosphate acyltransferase">
    <location>
        <begin position="1"/>
        <end position="834"/>
    </location>
</feature>
<feature type="short sequence motif" description="HXXXXD motif">
    <location>
        <begin position="309"/>
        <end position="314"/>
    </location>
</feature>
<keyword id="KW-0012">Acyltransferase</keyword>
<keyword id="KW-0997">Cell inner membrane</keyword>
<keyword id="KW-1003">Cell membrane</keyword>
<keyword id="KW-0444">Lipid biosynthesis</keyword>
<keyword id="KW-0443">Lipid metabolism</keyword>
<keyword id="KW-0472">Membrane</keyword>
<keyword id="KW-0594">Phospholipid biosynthesis</keyword>
<keyword id="KW-1208">Phospholipid metabolism</keyword>
<keyword id="KW-0808">Transferase</keyword>
<protein>
    <recommendedName>
        <fullName evidence="1">Glycerol-3-phosphate acyltransferase</fullName>
        <shortName evidence="1">GPAT</shortName>
        <ecNumber evidence="1">2.3.1.15</ecNumber>
    </recommendedName>
</protein>